<gene>
    <name evidence="1" type="primary">rplE</name>
    <name type="ordered locus">Sputcn32_3747</name>
</gene>
<dbReference type="EMBL" id="CP000681">
    <property type="protein sequence ID" value="ABP77454.1"/>
    <property type="molecule type" value="Genomic_DNA"/>
</dbReference>
<dbReference type="SMR" id="A4YBX1"/>
<dbReference type="STRING" id="319224.Sputcn32_3747"/>
<dbReference type="KEGG" id="spc:Sputcn32_3747"/>
<dbReference type="eggNOG" id="COG0094">
    <property type="taxonomic scope" value="Bacteria"/>
</dbReference>
<dbReference type="HOGENOM" id="CLU_061015_2_1_6"/>
<dbReference type="GO" id="GO:1990904">
    <property type="term" value="C:ribonucleoprotein complex"/>
    <property type="evidence" value="ECO:0007669"/>
    <property type="project" value="UniProtKB-KW"/>
</dbReference>
<dbReference type="GO" id="GO:0005840">
    <property type="term" value="C:ribosome"/>
    <property type="evidence" value="ECO:0007669"/>
    <property type="project" value="UniProtKB-KW"/>
</dbReference>
<dbReference type="GO" id="GO:0019843">
    <property type="term" value="F:rRNA binding"/>
    <property type="evidence" value="ECO:0007669"/>
    <property type="project" value="UniProtKB-UniRule"/>
</dbReference>
<dbReference type="GO" id="GO:0003735">
    <property type="term" value="F:structural constituent of ribosome"/>
    <property type="evidence" value="ECO:0007669"/>
    <property type="project" value="InterPro"/>
</dbReference>
<dbReference type="GO" id="GO:0000049">
    <property type="term" value="F:tRNA binding"/>
    <property type="evidence" value="ECO:0007669"/>
    <property type="project" value="UniProtKB-UniRule"/>
</dbReference>
<dbReference type="GO" id="GO:0006412">
    <property type="term" value="P:translation"/>
    <property type="evidence" value="ECO:0007669"/>
    <property type="project" value="UniProtKB-UniRule"/>
</dbReference>
<dbReference type="FunFam" id="3.30.1440.10:FF:000001">
    <property type="entry name" value="50S ribosomal protein L5"/>
    <property type="match status" value="1"/>
</dbReference>
<dbReference type="Gene3D" id="3.30.1440.10">
    <property type="match status" value="1"/>
</dbReference>
<dbReference type="HAMAP" id="MF_01333_B">
    <property type="entry name" value="Ribosomal_uL5_B"/>
    <property type="match status" value="1"/>
</dbReference>
<dbReference type="InterPro" id="IPR002132">
    <property type="entry name" value="Ribosomal_uL5"/>
</dbReference>
<dbReference type="InterPro" id="IPR020930">
    <property type="entry name" value="Ribosomal_uL5_bac-type"/>
</dbReference>
<dbReference type="InterPro" id="IPR031309">
    <property type="entry name" value="Ribosomal_uL5_C"/>
</dbReference>
<dbReference type="InterPro" id="IPR020929">
    <property type="entry name" value="Ribosomal_uL5_CS"/>
</dbReference>
<dbReference type="InterPro" id="IPR022803">
    <property type="entry name" value="Ribosomal_uL5_dom_sf"/>
</dbReference>
<dbReference type="InterPro" id="IPR031310">
    <property type="entry name" value="Ribosomal_uL5_N"/>
</dbReference>
<dbReference type="NCBIfam" id="NF000585">
    <property type="entry name" value="PRK00010.1"/>
    <property type="match status" value="1"/>
</dbReference>
<dbReference type="PANTHER" id="PTHR11994">
    <property type="entry name" value="60S RIBOSOMAL PROTEIN L11-RELATED"/>
    <property type="match status" value="1"/>
</dbReference>
<dbReference type="Pfam" id="PF00281">
    <property type="entry name" value="Ribosomal_L5"/>
    <property type="match status" value="1"/>
</dbReference>
<dbReference type="Pfam" id="PF00673">
    <property type="entry name" value="Ribosomal_L5_C"/>
    <property type="match status" value="1"/>
</dbReference>
<dbReference type="PIRSF" id="PIRSF002161">
    <property type="entry name" value="Ribosomal_L5"/>
    <property type="match status" value="1"/>
</dbReference>
<dbReference type="SUPFAM" id="SSF55282">
    <property type="entry name" value="RL5-like"/>
    <property type="match status" value="1"/>
</dbReference>
<dbReference type="PROSITE" id="PS00358">
    <property type="entry name" value="RIBOSOMAL_L5"/>
    <property type="match status" value="1"/>
</dbReference>
<evidence type="ECO:0000255" key="1">
    <source>
        <dbReference type="HAMAP-Rule" id="MF_01333"/>
    </source>
</evidence>
<evidence type="ECO:0000305" key="2"/>
<sequence length="179" mass="20216">MAKLHDKYQETVVAELAKKFGYTSVMQVPRIEKITLNMGVGEAVADKKVMEHALRDMTAIAGQKPVVTVARKSVAGFKIREGYPIGCKVTLRGERMWEFLERLVDIAIPRIRDFRGLSAKAFDGRGNYAMGVREQIIFPEIDYDKIDKIRGMDIVITTSAKTDEEGRALLDAFNFPFKK</sequence>
<accession>A4YBX1</accession>
<organism>
    <name type="scientific">Shewanella putrefaciens (strain CN-32 / ATCC BAA-453)</name>
    <dbReference type="NCBI Taxonomy" id="319224"/>
    <lineage>
        <taxon>Bacteria</taxon>
        <taxon>Pseudomonadati</taxon>
        <taxon>Pseudomonadota</taxon>
        <taxon>Gammaproteobacteria</taxon>
        <taxon>Alteromonadales</taxon>
        <taxon>Shewanellaceae</taxon>
        <taxon>Shewanella</taxon>
    </lineage>
</organism>
<name>RL5_SHEPC</name>
<protein>
    <recommendedName>
        <fullName evidence="1">Large ribosomal subunit protein uL5</fullName>
    </recommendedName>
    <alternativeName>
        <fullName evidence="2">50S ribosomal protein L5</fullName>
    </alternativeName>
</protein>
<proteinExistence type="inferred from homology"/>
<comment type="function">
    <text evidence="1">This is one of the proteins that bind and probably mediate the attachment of the 5S RNA into the large ribosomal subunit, where it forms part of the central protuberance. In the 70S ribosome it contacts protein S13 of the 30S subunit (bridge B1b), connecting the 2 subunits; this bridge is implicated in subunit movement. Contacts the P site tRNA; the 5S rRNA and some of its associated proteins might help stabilize positioning of ribosome-bound tRNAs.</text>
</comment>
<comment type="subunit">
    <text evidence="1">Part of the 50S ribosomal subunit; part of the 5S rRNA/L5/L18/L25 subcomplex. Contacts the 5S rRNA and the P site tRNA. Forms a bridge to the 30S subunit in the 70S ribosome.</text>
</comment>
<comment type="similarity">
    <text evidence="1">Belongs to the universal ribosomal protein uL5 family.</text>
</comment>
<feature type="chain" id="PRO_1000052825" description="Large ribosomal subunit protein uL5">
    <location>
        <begin position="1"/>
        <end position="179"/>
    </location>
</feature>
<reference key="1">
    <citation type="submission" date="2007-04" db="EMBL/GenBank/DDBJ databases">
        <title>Complete sequence of Shewanella putrefaciens CN-32.</title>
        <authorList>
            <consortium name="US DOE Joint Genome Institute"/>
            <person name="Copeland A."/>
            <person name="Lucas S."/>
            <person name="Lapidus A."/>
            <person name="Barry K."/>
            <person name="Detter J.C."/>
            <person name="Glavina del Rio T."/>
            <person name="Hammon N."/>
            <person name="Israni S."/>
            <person name="Dalin E."/>
            <person name="Tice H."/>
            <person name="Pitluck S."/>
            <person name="Chain P."/>
            <person name="Malfatti S."/>
            <person name="Shin M."/>
            <person name="Vergez L."/>
            <person name="Schmutz J."/>
            <person name="Larimer F."/>
            <person name="Land M."/>
            <person name="Hauser L."/>
            <person name="Kyrpides N."/>
            <person name="Mikhailova N."/>
            <person name="Romine M.F."/>
            <person name="Fredrickson J."/>
            <person name="Tiedje J."/>
            <person name="Richardson P."/>
        </authorList>
    </citation>
    <scope>NUCLEOTIDE SEQUENCE [LARGE SCALE GENOMIC DNA]</scope>
    <source>
        <strain>CN-32 / ATCC BAA-453</strain>
    </source>
</reference>
<keyword id="KW-0687">Ribonucleoprotein</keyword>
<keyword id="KW-0689">Ribosomal protein</keyword>
<keyword id="KW-0694">RNA-binding</keyword>
<keyword id="KW-0699">rRNA-binding</keyword>
<keyword id="KW-0820">tRNA-binding</keyword>